<feature type="signal peptide" evidence="3">
    <location>
        <begin position="1"/>
        <end position="21"/>
    </location>
</feature>
<feature type="chain" id="PRO_0000045484" description="Izumo sperm-egg fusion protein 1">
    <location>
        <begin position="22"/>
        <end position="383"/>
    </location>
</feature>
<feature type="topological domain" description="Extracellular" evidence="3">
    <location>
        <begin position="22"/>
        <end position="306"/>
    </location>
</feature>
<feature type="transmembrane region" description="Helical" evidence="3">
    <location>
        <begin position="307"/>
        <end position="327"/>
    </location>
</feature>
<feature type="topological domain" description="Cytoplasmic" evidence="3">
    <location>
        <begin position="328"/>
        <end position="383"/>
    </location>
</feature>
<feature type="domain" description="Ig-like C2-type">
    <location>
        <begin position="167"/>
        <end position="251"/>
    </location>
</feature>
<feature type="region of interest" description="Important for interaction with IZUMO1R" evidence="1">
    <location>
        <begin position="148"/>
        <end position="160"/>
    </location>
</feature>
<feature type="region of interest" description="Disordered" evidence="4">
    <location>
        <begin position="335"/>
        <end position="383"/>
    </location>
</feature>
<feature type="compositionally biased region" description="Polar residues" evidence="4">
    <location>
        <begin position="337"/>
        <end position="346"/>
    </location>
</feature>
<feature type="compositionally biased region" description="Basic and acidic residues" evidence="4">
    <location>
        <begin position="370"/>
        <end position="383"/>
    </location>
</feature>
<feature type="modified residue" description="Phosphoserine" evidence="11">
    <location>
        <position position="339"/>
    </location>
</feature>
<feature type="modified residue" description="Phosphoserine" evidence="11">
    <location>
        <position position="346"/>
    </location>
</feature>
<feature type="modified residue" description="Phosphoserine" evidence="11">
    <location>
        <position position="366"/>
    </location>
</feature>
<feature type="modified residue" description="Phosphothreonine" evidence="11">
    <location>
        <position position="372"/>
    </location>
</feature>
<feature type="glycosylation site" description="N-linked (GlcNAc...) asparagine" evidence="3">
    <location>
        <position position="204"/>
    </location>
</feature>
<feature type="disulfide bond" evidence="1">
    <location>
        <begin position="22"/>
        <end position="149"/>
    </location>
</feature>
<feature type="disulfide bond" evidence="1">
    <location>
        <begin position="25"/>
        <end position="152"/>
    </location>
</feature>
<feature type="disulfide bond" evidence="1">
    <location>
        <begin position="135"/>
        <end position="159"/>
    </location>
</feature>
<feature type="disulfide bond" evidence="1">
    <location>
        <begin position="139"/>
        <end position="165"/>
    </location>
</feature>
<feature type="disulfide bond" evidence="1">
    <location>
        <begin position="182"/>
        <end position="233"/>
    </location>
</feature>
<name>IZUM1_RAT</name>
<protein>
    <recommendedName>
        <fullName>Izumo sperm-egg fusion protein 1</fullName>
    </recommendedName>
    <alternativeName>
        <fullName>Oocyte binding/fusion factor</fullName>
        <shortName>OBF</shortName>
    </alternativeName>
    <alternativeName>
        <fullName evidence="7">Sperm-specific protein izumo</fullName>
    </alternativeName>
</protein>
<organism>
    <name type="scientific">Rattus norvegicus</name>
    <name type="common">Rat</name>
    <dbReference type="NCBI Taxonomy" id="10116"/>
    <lineage>
        <taxon>Eukaryota</taxon>
        <taxon>Metazoa</taxon>
        <taxon>Chordata</taxon>
        <taxon>Craniata</taxon>
        <taxon>Vertebrata</taxon>
        <taxon>Euteleostomi</taxon>
        <taxon>Mammalia</taxon>
        <taxon>Eutheria</taxon>
        <taxon>Euarchontoglires</taxon>
        <taxon>Glires</taxon>
        <taxon>Rodentia</taxon>
        <taxon>Myomorpha</taxon>
        <taxon>Muroidea</taxon>
        <taxon>Muridae</taxon>
        <taxon>Murinae</taxon>
        <taxon>Rattus</taxon>
    </lineage>
</organism>
<dbReference type="EMBL" id="AB195683">
    <property type="protein sequence ID" value="BAD91013.1"/>
    <property type="molecule type" value="mRNA"/>
</dbReference>
<dbReference type="EMBL" id="BC079244">
    <property type="protein sequence ID" value="AAH79244.1"/>
    <property type="molecule type" value="mRNA"/>
</dbReference>
<dbReference type="RefSeq" id="NP_001017514.1">
    <property type="nucleotide sequence ID" value="NM_001017514.1"/>
</dbReference>
<dbReference type="SMR" id="Q6AY06"/>
<dbReference type="FunCoup" id="Q6AY06">
    <property type="interactions" value="7"/>
</dbReference>
<dbReference type="STRING" id="10116.ENSRNOP00000035119"/>
<dbReference type="GlyCosmos" id="Q6AY06">
    <property type="glycosylation" value="1 site, No reported glycans"/>
</dbReference>
<dbReference type="GlyGen" id="Q6AY06">
    <property type="glycosylation" value="1 site"/>
</dbReference>
<dbReference type="iPTMnet" id="Q6AY06"/>
<dbReference type="PhosphoSitePlus" id="Q6AY06"/>
<dbReference type="PaxDb" id="10116-ENSRNOP00000035119"/>
<dbReference type="GeneID" id="499152"/>
<dbReference type="KEGG" id="rno:499152"/>
<dbReference type="AGR" id="RGD:1565454"/>
<dbReference type="CTD" id="284359"/>
<dbReference type="RGD" id="1565454">
    <property type="gene designation" value="Izumo1"/>
</dbReference>
<dbReference type="VEuPathDB" id="HostDB:ENSRNOG00000021004"/>
<dbReference type="eggNOG" id="ENOG502SFD8">
    <property type="taxonomic scope" value="Eukaryota"/>
</dbReference>
<dbReference type="HOGENOM" id="CLU_044481_0_0_1"/>
<dbReference type="InParanoid" id="Q6AY06"/>
<dbReference type="OrthoDB" id="9907157at2759"/>
<dbReference type="PhylomeDB" id="Q6AY06"/>
<dbReference type="TreeFam" id="TF338356"/>
<dbReference type="Reactome" id="R-RNO-1300645">
    <property type="pathway name" value="Acrosome Reaction and Sperm:Oocyte Membrane Binding"/>
</dbReference>
<dbReference type="PRO" id="PR:Q6AY06"/>
<dbReference type="Proteomes" id="UP000002494">
    <property type="component" value="Chromosome 1"/>
</dbReference>
<dbReference type="Bgee" id="ENSRNOG00000024678">
    <property type="expression patterns" value="Expressed in testis and 13 other cell types or tissues"/>
</dbReference>
<dbReference type="GO" id="GO:0002080">
    <property type="term" value="C:acrosomal membrane"/>
    <property type="evidence" value="ECO:0000250"/>
    <property type="project" value="UniProtKB"/>
</dbReference>
<dbReference type="GO" id="GO:0001669">
    <property type="term" value="C:acrosomal vesicle"/>
    <property type="evidence" value="ECO:0000250"/>
    <property type="project" value="UniProtKB"/>
</dbReference>
<dbReference type="GO" id="GO:0005789">
    <property type="term" value="C:endoplasmic reticulum membrane"/>
    <property type="evidence" value="ECO:0000250"/>
    <property type="project" value="UniProtKB"/>
</dbReference>
<dbReference type="GO" id="GO:0016020">
    <property type="term" value="C:membrane"/>
    <property type="evidence" value="ECO:0000266"/>
    <property type="project" value="RGD"/>
</dbReference>
<dbReference type="GO" id="GO:0005886">
    <property type="term" value="C:plasma membrane"/>
    <property type="evidence" value="ECO:0000314"/>
    <property type="project" value="UniProtKB"/>
</dbReference>
<dbReference type="GO" id="GO:0098635">
    <property type="term" value="C:protein complex involved in cell-cell adhesion"/>
    <property type="evidence" value="ECO:0000250"/>
    <property type="project" value="UniProtKB"/>
</dbReference>
<dbReference type="GO" id="GO:0086080">
    <property type="term" value="F:protein binding involved in heterotypic cell-cell adhesion"/>
    <property type="evidence" value="ECO:0000250"/>
    <property type="project" value="UniProtKB"/>
</dbReference>
<dbReference type="GO" id="GO:0042803">
    <property type="term" value="F:protein homodimerization activity"/>
    <property type="evidence" value="ECO:0000314"/>
    <property type="project" value="UniProtKB"/>
</dbReference>
<dbReference type="GO" id="GO:0048018">
    <property type="term" value="F:receptor ligand activity"/>
    <property type="evidence" value="ECO:0000266"/>
    <property type="project" value="RGD"/>
</dbReference>
<dbReference type="GO" id="GO:0005102">
    <property type="term" value="F:signaling receptor binding"/>
    <property type="evidence" value="ECO:0000266"/>
    <property type="project" value="RGD"/>
</dbReference>
<dbReference type="GO" id="GO:0007339">
    <property type="term" value="P:binding of sperm to zona pellucida"/>
    <property type="evidence" value="ECO:0000315"/>
    <property type="project" value="UniProtKB"/>
</dbReference>
<dbReference type="GO" id="GO:0007342">
    <property type="term" value="P:fusion of sperm to egg plasma membrane involved in single fertilization"/>
    <property type="evidence" value="ECO:0000250"/>
    <property type="project" value="UniProtKB"/>
</dbReference>
<dbReference type="GO" id="GO:0034113">
    <property type="term" value="P:heterotypic cell-cell adhesion"/>
    <property type="evidence" value="ECO:0000266"/>
    <property type="project" value="RGD"/>
</dbReference>
<dbReference type="GO" id="GO:0007338">
    <property type="term" value="P:single fertilization"/>
    <property type="evidence" value="ECO:0000266"/>
    <property type="project" value="RGD"/>
</dbReference>
<dbReference type="GO" id="GO:0035036">
    <property type="term" value="P:sperm-egg recognition"/>
    <property type="evidence" value="ECO:0000250"/>
    <property type="project" value="UniProtKB"/>
</dbReference>
<dbReference type="GO" id="GO:0000768">
    <property type="term" value="P:syncytium formation by plasma membrane fusion"/>
    <property type="evidence" value="ECO:0000250"/>
    <property type="project" value="UniProtKB"/>
</dbReference>
<dbReference type="InterPro" id="IPR036179">
    <property type="entry name" value="Ig-like_dom_sf"/>
</dbReference>
<dbReference type="InterPro" id="IPR029389">
    <property type="entry name" value="IZUMO"/>
</dbReference>
<dbReference type="InterPro" id="IPR032699">
    <property type="entry name" value="Izumo-Ig"/>
</dbReference>
<dbReference type="InterPro" id="IPR032700">
    <property type="entry name" value="IZUMO1"/>
</dbReference>
<dbReference type="PANTHER" id="PTHR35540">
    <property type="entry name" value="IZUMO SPERM-EGG FUSION PROTEIN 1"/>
    <property type="match status" value="1"/>
</dbReference>
<dbReference type="PANTHER" id="PTHR35540:SF1">
    <property type="entry name" value="IZUMO SPERM-EGG FUSION PROTEIN 1"/>
    <property type="match status" value="1"/>
</dbReference>
<dbReference type="Pfam" id="PF15005">
    <property type="entry name" value="IZUMO"/>
    <property type="match status" value="1"/>
</dbReference>
<dbReference type="Pfam" id="PF16706">
    <property type="entry name" value="Izumo-Ig"/>
    <property type="match status" value="1"/>
</dbReference>
<dbReference type="SUPFAM" id="SSF48726">
    <property type="entry name" value="Immunoglobulin"/>
    <property type="match status" value="1"/>
</dbReference>
<reference key="1">
    <citation type="journal article" date="2005" name="Nature">
        <title>The immunoglobulin superfamily protein Izumo is required for sperm to fuse with eggs.</title>
        <authorList>
            <person name="Inoue N."/>
            <person name="Ikawa M."/>
            <person name="Isotani A."/>
            <person name="Okabe M."/>
        </authorList>
    </citation>
    <scope>NUCLEOTIDE SEQUENCE [MRNA]</scope>
    <source>
        <tissue>Testis</tissue>
    </source>
</reference>
<reference key="2">
    <citation type="journal article" date="2004" name="Genome Res.">
        <title>The status, quality, and expansion of the NIH full-length cDNA project: the Mammalian Gene Collection (MGC).</title>
        <authorList>
            <consortium name="The MGC Project Team"/>
        </authorList>
    </citation>
    <scope>NUCLEOTIDE SEQUENCE [LARGE SCALE MRNA]</scope>
    <source>
        <tissue>Testis</tissue>
    </source>
</reference>
<reference key="3">
    <citation type="journal article" date="2009" name="Mol. Reprod. Dev.">
        <title>Izumo is part of a multiprotein family whose members form large complexes on mammalian sperm.</title>
        <authorList>
            <person name="Ellerman D.A."/>
            <person name="Pei J."/>
            <person name="Gupta S."/>
            <person name="Snell W.J."/>
            <person name="Myles D."/>
            <person name="Primakoff P."/>
        </authorList>
    </citation>
    <scope>SUBUNIT</scope>
</reference>
<reference key="4">
    <citation type="journal article" date="2012" name="Nat. Commun.">
        <title>Quantitative maps of protein phosphorylation sites across 14 different rat organs and tissues.</title>
        <authorList>
            <person name="Lundby A."/>
            <person name="Secher A."/>
            <person name="Lage K."/>
            <person name="Nordsborg N.B."/>
            <person name="Dmytriyev A."/>
            <person name="Lundby C."/>
            <person name="Olsen J.V."/>
        </authorList>
    </citation>
    <scope>PHOSPHORYLATION [LARGE SCALE ANALYSIS] AT SER-339; SER-346; SER-366 AND THR-372</scope>
    <scope>IDENTIFICATION BY MASS SPECTROMETRY [LARGE SCALE ANALYSIS]</scope>
</reference>
<reference key="5">
    <citation type="journal article" date="2021" name="Front. Cell Dev. Biol.">
        <title>Sperm IZUMO1 Is Required for Binding Preceding Fusion With Oolemma in Mice and Rats.</title>
        <authorList>
            <person name="Matsumura T."/>
            <person name="Noda T."/>
            <person name="Satouh Y."/>
            <person name="Morohoshi A."/>
            <person name="Yuri S."/>
            <person name="Ogawa M."/>
            <person name="Lu Y."/>
            <person name="Isotani A."/>
            <person name="Ikawa M."/>
        </authorList>
    </citation>
    <scope>FUNCTION</scope>
    <scope>DISRUPTION PHENOTYPE</scope>
</reference>
<reference key="6">
    <citation type="journal article" date="2024" name="Theriogenology">
        <title>Participation of WD repeat-containing protein 54 (WDR54) in rat sperm-oocyte fusion through interaction with both IZUMO1 and JUNO.</title>
        <authorList>
            <person name="Lai X."/>
            <person name="Liu R."/>
            <person name="Li M."/>
            <person name="Fan Y."/>
            <person name="Li H."/>
            <person name="Han G."/>
            <person name="Guo R."/>
            <person name="Ma H."/>
            <person name="Su H."/>
            <person name="Xing W."/>
        </authorList>
    </citation>
    <scope>INTERACTION WITH WDR54</scope>
    <scope>SUBCELLULAR LOCATION</scope>
    <scope>TISSUE SPECIFICITY</scope>
</reference>
<sequence length="383" mass="43579">MGLHFTLLLAALANCLCPARLCIICDPFVVAAIKTLEQNYLPTHLAPEHHEDVMKRVEQEVRNFADLPLNQNTFLGVVDEDTLEQASWSFLKDLKRITDSDVKGELFVKELFWMLRLQKDIFATLVARFQKEVYCPNQCGTMSQTLIWCNKCEKQMHFCRKSMDCGERQIEVHRLEDMVLDCQLSWHHASEGLTDYSFYRVWGNSSETLMSKGKEPYLTKTMVGPEDAGNYRCELDTVNAGPATIIYYHVTVLPPRSVEEKPPPNIVTQEEEETPVQVIVPTLEPEPEPEPIPTVTHRPEKKLKSRLLILLILGFVVLVASVIASVLHFRKTRVKSKNSNVENKTSAAEFKSEAESPQKMGSRKLSQAEFHTDSSDKVEEADN</sequence>
<comment type="function">
    <text evidence="2 5">Essential sperm cell-surface protein required for fertilization by acting as a ligand for IZUMO1R/JUNO receptor on egg. The IZUMO1:IZUMO1R/JUNO interaction is a necessary adhesion event between sperm and egg that is required for fertilization but is not sufficient for cell fusion. The ligand-receptor interaction probably does not act as a membrane 'fusogen' (By similarity). Plays a critical role in sperm-oolemma binding prior to plasma membrane fusion (PubMed:35096839). Can mediate cell-cell fusion in cultured mammalian cells independently of its binding to IZUMO1R/JUNO (By similarity).</text>
</comment>
<comment type="subunit">
    <text evidence="1 2 6">Monomer, homodimer; disulfide-linked and homooligomer; depending on the context. Interacts with IZUMO1R/JUNO (By similarity). IZUMO1 and IZUMO1R/JUNO form a complex with 1:1 stoichiometry (By similarity). In gamete recognition, IZUMO1R/JUNO first binds to monomeric IZUMO1. The weak, but specific interaction with IZUMO1R/JUNO induces IZUMO1 homodimerization. The process follows a tight binding phase where IZUMO1 bends the entire structure towards the sperm membrane side through a thiol-disulfide exchange reaction. The molecule no longer binds to IZUMO1R/JUNO and instead binds to a putative second oocyte receptor. Interacts with ACE3 (By similarity). Part of a oolemmal binding multimeric complex (IZUMO1 complex) composed at least of IZUMO1 and GLIPR1L1; the complex assemblage is influenced by the maturation status of the male germ cell. Interacts with GLIPR1L1. Interacts with FREY; the interaction retains IZUMO1 at the endoplasmic reticulum membrane and coordinates IZUMO1 complex assembly (By similarity). Interacts with WDR54 (PubMed:37951137). Forms a complex with SPACA6 and TMEM81 on spermatocyte cell membrane (By similarity).</text>
</comment>
<comment type="subcellular location">
    <subcellularLocation>
        <location evidence="6">Cell membrane</location>
        <topology evidence="3">Single-pass type I membrane protein</topology>
    </subcellularLocation>
    <subcellularLocation>
        <location evidence="2">Cytoplasmic vesicle</location>
        <location evidence="2">Secretory vesicle</location>
        <location evidence="2">Acrosome membrane</location>
        <topology evidence="3">Single-pass type I membrane protein</topology>
    </subcellularLocation>
    <text evidence="2">Localizes initially to the acrosome membrane of the sperm head (both outer and inner acrosomal membranes). During the acrosome reaction, translocates to the plasma membrane.</text>
</comment>
<comment type="tissue specificity">
    <text evidence="6">Expressed in sperm (at protein level).</text>
</comment>
<comment type="domain">
    <text evidence="1">The extracellular domain assumes a distinct boomerang shape when not bound to IZUMO1R/JUNO. Interaction with IZUMO1R/JUNO triggers a conformation change, so that the IZUMO1 extracellular domain assumes an upright conformation.</text>
</comment>
<comment type="domain">
    <text evidence="2">The cytoplasmic C-terminus region is not essential for fertilization. It is however required for protein stability.</text>
</comment>
<comment type="PTM">
    <text evidence="2">N-glycosylated. Glycosylation is not essential for fusion and for proper protein trafficking in sperm.</text>
</comment>
<comment type="PTM">
    <text evidence="2">Phosphorylated. The cytoplasmic C-terminus is phosphorylated and undergoes phosphorylation changes during epididymal transit.</text>
</comment>
<comment type="disruption phenotype">
    <text evidence="5">Males are infertile and spermatozoa show impaired adhesion to the oolemma.</text>
</comment>
<comment type="miscellaneous">
    <text evidence="9">Izumo is the name of a Japanese shrine to marriage.</text>
</comment>
<comment type="similarity">
    <text evidence="8">Belongs to the Izumo family.</text>
</comment>
<accession>Q6AY06</accession>
<gene>
    <name evidence="7 10" type="primary">Izumo1</name>
</gene>
<keyword id="KW-1003">Cell membrane</keyword>
<keyword id="KW-0968">Cytoplasmic vesicle</keyword>
<keyword id="KW-1015">Disulfide bond</keyword>
<keyword id="KW-0278">Fertilization</keyword>
<keyword id="KW-0325">Glycoprotein</keyword>
<keyword id="KW-0393">Immunoglobulin domain</keyword>
<keyword id="KW-0472">Membrane</keyword>
<keyword id="KW-0597">Phosphoprotein</keyword>
<keyword id="KW-1185">Reference proteome</keyword>
<keyword id="KW-0732">Signal</keyword>
<keyword id="KW-0812">Transmembrane</keyword>
<keyword id="KW-1133">Transmembrane helix</keyword>
<evidence type="ECO:0000250" key="1">
    <source>
        <dbReference type="UniProtKB" id="Q8IYV9"/>
    </source>
</evidence>
<evidence type="ECO:0000250" key="2">
    <source>
        <dbReference type="UniProtKB" id="Q9D9J7"/>
    </source>
</evidence>
<evidence type="ECO:0000255" key="3"/>
<evidence type="ECO:0000256" key="4">
    <source>
        <dbReference type="SAM" id="MobiDB-lite"/>
    </source>
</evidence>
<evidence type="ECO:0000269" key="5">
    <source>
    </source>
</evidence>
<evidence type="ECO:0000269" key="6">
    <source>
    </source>
</evidence>
<evidence type="ECO:0000303" key="7">
    <source>
    </source>
</evidence>
<evidence type="ECO:0000305" key="8"/>
<evidence type="ECO:0000305" key="9">
    <source>
    </source>
</evidence>
<evidence type="ECO:0000312" key="10">
    <source>
        <dbReference type="RGD" id="1565454"/>
    </source>
</evidence>
<evidence type="ECO:0007744" key="11">
    <source>
    </source>
</evidence>
<proteinExistence type="evidence at protein level"/>